<reference key="1">
    <citation type="journal article" date="2006" name="Proc. Natl. Acad. Sci. U.S.A.">
        <title>Identification of genes subject to positive selection in uropathogenic strains of Escherichia coli: a comparative genomics approach.</title>
        <authorList>
            <person name="Chen S.L."/>
            <person name="Hung C.-S."/>
            <person name="Xu J."/>
            <person name="Reigstad C.S."/>
            <person name="Magrini V."/>
            <person name="Sabo A."/>
            <person name="Blasiar D."/>
            <person name="Bieri T."/>
            <person name="Meyer R.R."/>
            <person name="Ozersky P."/>
            <person name="Armstrong J.R."/>
            <person name="Fulton R.S."/>
            <person name="Latreille J.P."/>
            <person name="Spieth J."/>
            <person name="Hooton T.M."/>
            <person name="Mardis E.R."/>
            <person name="Hultgren S.J."/>
            <person name="Gordon J.I."/>
        </authorList>
    </citation>
    <scope>NUCLEOTIDE SEQUENCE [LARGE SCALE GENOMIC DNA]</scope>
    <source>
        <strain>UTI89 / UPEC</strain>
    </source>
</reference>
<protein>
    <recommendedName>
        <fullName evidence="1">Glycine--tRNA ligase alpha subunit</fullName>
        <ecNumber evidence="1">6.1.1.14</ecNumber>
    </recommendedName>
    <alternativeName>
        <fullName evidence="1">Glycyl-tRNA synthetase alpha subunit</fullName>
        <shortName evidence="1">GlyRS</shortName>
    </alternativeName>
</protein>
<proteinExistence type="inferred from homology"/>
<comment type="catalytic activity">
    <reaction evidence="1">
        <text>tRNA(Gly) + glycine + ATP = glycyl-tRNA(Gly) + AMP + diphosphate</text>
        <dbReference type="Rhea" id="RHEA:16013"/>
        <dbReference type="Rhea" id="RHEA-COMP:9664"/>
        <dbReference type="Rhea" id="RHEA-COMP:9683"/>
        <dbReference type="ChEBI" id="CHEBI:30616"/>
        <dbReference type="ChEBI" id="CHEBI:33019"/>
        <dbReference type="ChEBI" id="CHEBI:57305"/>
        <dbReference type="ChEBI" id="CHEBI:78442"/>
        <dbReference type="ChEBI" id="CHEBI:78522"/>
        <dbReference type="ChEBI" id="CHEBI:456215"/>
        <dbReference type="EC" id="6.1.1.14"/>
    </reaction>
</comment>
<comment type="subunit">
    <text evidence="1">Tetramer of two alpha and two beta subunits.</text>
</comment>
<comment type="subcellular location">
    <subcellularLocation>
        <location evidence="1">Cytoplasm</location>
    </subcellularLocation>
</comment>
<comment type="similarity">
    <text evidence="1">Belongs to the class-II aminoacyl-tRNA synthetase family.</text>
</comment>
<dbReference type="EC" id="6.1.1.14" evidence="1"/>
<dbReference type="EMBL" id="CP000243">
    <property type="protein sequence ID" value="ABE09528.1"/>
    <property type="molecule type" value="Genomic_DNA"/>
</dbReference>
<dbReference type="RefSeq" id="WP_001168544.1">
    <property type="nucleotide sequence ID" value="NZ_CP064825.1"/>
</dbReference>
<dbReference type="SMR" id="Q1R536"/>
<dbReference type="GeneID" id="93778290"/>
<dbReference type="KEGG" id="eci:UTI89_C4100"/>
<dbReference type="HOGENOM" id="CLU_057066_1_0_6"/>
<dbReference type="Proteomes" id="UP000001952">
    <property type="component" value="Chromosome"/>
</dbReference>
<dbReference type="GO" id="GO:0005829">
    <property type="term" value="C:cytosol"/>
    <property type="evidence" value="ECO:0007669"/>
    <property type="project" value="TreeGrafter"/>
</dbReference>
<dbReference type="GO" id="GO:0005524">
    <property type="term" value="F:ATP binding"/>
    <property type="evidence" value="ECO:0007669"/>
    <property type="project" value="UniProtKB-UniRule"/>
</dbReference>
<dbReference type="GO" id="GO:0004820">
    <property type="term" value="F:glycine-tRNA ligase activity"/>
    <property type="evidence" value="ECO:0007669"/>
    <property type="project" value="UniProtKB-UniRule"/>
</dbReference>
<dbReference type="GO" id="GO:0006426">
    <property type="term" value="P:glycyl-tRNA aminoacylation"/>
    <property type="evidence" value="ECO:0007669"/>
    <property type="project" value="UniProtKB-UniRule"/>
</dbReference>
<dbReference type="CDD" id="cd00733">
    <property type="entry name" value="GlyRS_alpha_core"/>
    <property type="match status" value="1"/>
</dbReference>
<dbReference type="FunFam" id="1.20.58.180:FF:000001">
    <property type="entry name" value="Glycine--tRNA ligase alpha subunit"/>
    <property type="match status" value="1"/>
</dbReference>
<dbReference type="FunFam" id="3.30.930.10:FF:000006">
    <property type="entry name" value="Glycine--tRNA ligase alpha subunit"/>
    <property type="match status" value="1"/>
</dbReference>
<dbReference type="Gene3D" id="3.30.930.10">
    <property type="entry name" value="Bira Bifunctional Protein, Domain 2"/>
    <property type="match status" value="1"/>
</dbReference>
<dbReference type="Gene3D" id="1.20.58.180">
    <property type="entry name" value="Class II aaRS and biotin synthetases, domain 2"/>
    <property type="match status" value="1"/>
</dbReference>
<dbReference type="HAMAP" id="MF_00254">
    <property type="entry name" value="Gly_tRNA_synth_alpha"/>
    <property type="match status" value="1"/>
</dbReference>
<dbReference type="InterPro" id="IPR045864">
    <property type="entry name" value="aa-tRNA-synth_II/BPL/LPL"/>
</dbReference>
<dbReference type="InterPro" id="IPR006194">
    <property type="entry name" value="Gly-tRNA-synth_heterodimer"/>
</dbReference>
<dbReference type="InterPro" id="IPR002310">
    <property type="entry name" value="Gly-tRNA_ligase_asu"/>
</dbReference>
<dbReference type="NCBIfam" id="TIGR00388">
    <property type="entry name" value="glyQ"/>
    <property type="match status" value="1"/>
</dbReference>
<dbReference type="NCBIfam" id="NF006827">
    <property type="entry name" value="PRK09348.1"/>
    <property type="match status" value="1"/>
</dbReference>
<dbReference type="PANTHER" id="PTHR30075:SF2">
    <property type="entry name" value="GLYCINE--TRNA LIGASE, CHLOROPLASTIC_MITOCHONDRIAL 2"/>
    <property type="match status" value="1"/>
</dbReference>
<dbReference type="PANTHER" id="PTHR30075">
    <property type="entry name" value="GLYCYL-TRNA SYNTHETASE"/>
    <property type="match status" value="1"/>
</dbReference>
<dbReference type="Pfam" id="PF02091">
    <property type="entry name" value="tRNA-synt_2e"/>
    <property type="match status" value="1"/>
</dbReference>
<dbReference type="PRINTS" id="PR01044">
    <property type="entry name" value="TRNASYNTHGA"/>
</dbReference>
<dbReference type="SUPFAM" id="SSF55681">
    <property type="entry name" value="Class II aaRS and biotin synthetases"/>
    <property type="match status" value="1"/>
</dbReference>
<dbReference type="PROSITE" id="PS50861">
    <property type="entry name" value="AA_TRNA_LIGASE_II_GLYAB"/>
    <property type="match status" value="1"/>
</dbReference>
<keyword id="KW-0030">Aminoacyl-tRNA synthetase</keyword>
<keyword id="KW-0067">ATP-binding</keyword>
<keyword id="KW-0963">Cytoplasm</keyword>
<keyword id="KW-0436">Ligase</keyword>
<keyword id="KW-0547">Nucleotide-binding</keyword>
<keyword id="KW-0648">Protein biosynthesis</keyword>
<evidence type="ECO:0000255" key="1">
    <source>
        <dbReference type="HAMAP-Rule" id="MF_00254"/>
    </source>
</evidence>
<accession>Q1R536</accession>
<name>SYGA_ECOUT</name>
<organism>
    <name type="scientific">Escherichia coli (strain UTI89 / UPEC)</name>
    <dbReference type="NCBI Taxonomy" id="364106"/>
    <lineage>
        <taxon>Bacteria</taxon>
        <taxon>Pseudomonadati</taxon>
        <taxon>Pseudomonadota</taxon>
        <taxon>Gammaproteobacteria</taxon>
        <taxon>Enterobacterales</taxon>
        <taxon>Enterobacteriaceae</taxon>
        <taxon>Escherichia</taxon>
    </lineage>
</organism>
<sequence>MQKFDTRTFQGLILTLQDYWARQGCTIVQPLDMEVGAGTSHPMTCLRALGPEPMAAAYVQPSRRPTDGRYGENPNRLQHYYQFQVVIKPSPDNIQELYLGSLKELGMDPTIHDIRFVEDNWENPTLGAWGLGWEVWLNGMEVTQFTYFQQVGGLECKPVTGEITYGLERLAMYIQGVDSVYDLVWSDGPLGKTTYGDVFHQNEVEQSTYNFEYADVDFLFTCFEQYEKEAQQLLALENPLPLPAYERILKAAHSFNLLDARKAISVTERQRYILRIRTLTKAVAEAYYASREALGFPMCNKDK</sequence>
<feature type="chain" id="PRO_1000047420" description="Glycine--tRNA ligase alpha subunit">
    <location>
        <begin position="1"/>
        <end position="303"/>
    </location>
</feature>
<gene>
    <name evidence="1" type="primary">glyQ</name>
    <name type="ordered locus">UTI89_C4100</name>
</gene>